<keyword id="KW-1185">Reference proteome</keyword>
<keyword id="KW-0687">Ribonucleoprotein</keyword>
<keyword id="KW-0689">Ribosomal protein</keyword>
<keyword id="KW-0694">RNA-binding</keyword>
<keyword id="KW-0699">rRNA-binding</keyword>
<dbReference type="EMBL" id="AL445067">
    <property type="protein sequence ID" value="CAC12386.1"/>
    <property type="molecule type" value="Genomic_DNA"/>
</dbReference>
<dbReference type="RefSeq" id="WP_010901669.1">
    <property type="nucleotide sequence ID" value="NC_002578.1"/>
</dbReference>
<dbReference type="SMR" id="Q9HIR8"/>
<dbReference type="FunCoup" id="Q9HIR8">
    <property type="interactions" value="158"/>
</dbReference>
<dbReference type="STRING" id="273075.gene:9572485"/>
<dbReference type="PaxDb" id="273075-Ta1262"/>
<dbReference type="EnsemblBacteria" id="CAC12386">
    <property type="protein sequence ID" value="CAC12386"/>
    <property type="gene ID" value="CAC12386"/>
</dbReference>
<dbReference type="KEGG" id="tac:Ta1262"/>
<dbReference type="eggNOG" id="arCOG04096">
    <property type="taxonomic scope" value="Archaea"/>
</dbReference>
<dbReference type="HOGENOM" id="CLU_073626_0_3_2"/>
<dbReference type="InParanoid" id="Q9HIR8"/>
<dbReference type="OrthoDB" id="10698at2157"/>
<dbReference type="Proteomes" id="UP000001024">
    <property type="component" value="Chromosome"/>
</dbReference>
<dbReference type="GO" id="GO:0022627">
    <property type="term" value="C:cytosolic small ribosomal subunit"/>
    <property type="evidence" value="ECO:0007669"/>
    <property type="project" value="TreeGrafter"/>
</dbReference>
<dbReference type="GO" id="GO:0019843">
    <property type="term" value="F:rRNA binding"/>
    <property type="evidence" value="ECO:0007669"/>
    <property type="project" value="UniProtKB-UniRule"/>
</dbReference>
<dbReference type="GO" id="GO:0003735">
    <property type="term" value="F:structural constituent of ribosome"/>
    <property type="evidence" value="ECO:0007669"/>
    <property type="project" value="InterPro"/>
</dbReference>
<dbReference type="GO" id="GO:0006412">
    <property type="term" value="P:translation"/>
    <property type="evidence" value="ECO:0007669"/>
    <property type="project" value="UniProtKB-UniRule"/>
</dbReference>
<dbReference type="CDD" id="cd00364">
    <property type="entry name" value="Ribosomal_uS17"/>
    <property type="match status" value="1"/>
</dbReference>
<dbReference type="Gene3D" id="2.40.50.1000">
    <property type="match status" value="1"/>
</dbReference>
<dbReference type="HAMAP" id="MF_01345_A">
    <property type="entry name" value="Ribosomal_uS17_A"/>
    <property type="match status" value="1"/>
</dbReference>
<dbReference type="InterPro" id="IPR012340">
    <property type="entry name" value="NA-bd_OB-fold"/>
</dbReference>
<dbReference type="InterPro" id="IPR000266">
    <property type="entry name" value="Ribosomal_uS17"/>
</dbReference>
<dbReference type="InterPro" id="IPR028333">
    <property type="entry name" value="Ribosomal_uS17_arc/euk"/>
</dbReference>
<dbReference type="InterPro" id="IPR019978">
    <property type="entry name" value="Ribosomal_uS17_archaeal"/>
</dbReference>
<dbReference type="NCBIfam" id="NF006345">
    <property type="entry name" value="PRK08572.1"/>
    <property type="match status" value="1"/>
</dbReference>
<dbReference type="NCBIfam" id="TIGR03630">
    <property type="entry name" value="uS17_arch"/>
    <property type="match status" value="1"/>
</dbReference>
<dbReference type="PANTHER" id="PTHR10744">
    <property type="entry name" value="40S RIBOSOMAL PROTEIN S11 FAMILY MEMBER"/>
    <property type="match status" value="1"/>
</dbReference>
<dbReference type="PANTHER" id="PTHR10744:SF9">
    <property type="entry name" value="40S RIBOSOMAL PROTEIN S11-RELATED"/>
    <property type="match status" value="1"/>
</dbReference>
<dbReference type="Pfam" id="PF00366">
    <property type="entry name" value="Ribosomal_S17"/>
    <property type="match status" value="1"/>
</dbReference>
<dbReference type="PRINTS" id="PR00973">
    <property type="entry name" value="RIBOSOMALS17"/>
</dbReference>
<dbReference type="SUPFAM" id="SSF50249">
    <property type="entry name" value="Nucleic acid-binding proteins"/>
    <property type="match status" value="1"/>
</dbReference>
<evidence type="ECO:0000255" key="1">
    <source>
        <dbReference type="HAMAP-Rule" id="MF_01345"/>
    </source>
</evidence>
<evidence type="ECO:0000305" key="2"/>
<accession>Q9HIR8</accession>
<feature type="chain" id="PRO_0000232619" description="Small ribosomal subunit protein uS17">
    <location>
        <begin position="1"/>
        <end position="109"/>
    </location>
</feature>
<sequence length="109" mass="12434">MYTRNIGLDVKLPESECNDPHCPYHGKLSVRGQVLTGKVVSANMTKSAVVAREYQQYIPKYERKATKIKKYHVHVPDCIKIKPGDTVRFAECRKLAKTISFVIVEKVNQ</sequence>
<name>RS17_THEAC</name>
<proteinExistence type="inferred from homology"/>
<gene>
    <name evidence="1" type="primary">rps17</name>
    <name type="ordered locus">Ta1262</name>
</gene>
<protein>
    <recommendedName>
        <fullName evidence="1">Small ribosomal subunit protein uS17</fullName>
    </recommendedName>
    <alternativeName>
        <fullName evidence="2">30S ribosomal protein S17</fullName>
    </alternativeName>
</protein>
<reference key="1">
    <citation type="journal article" date="2000" name="Nature">
        <title>The genome sequence of the thermoacidophilic scavenger Thermoplasma acidophilum.</title>
        <authorList>
            <person name="Ruepp A."/>
            <person name="Graml W."/>
            <person name="Santos-Martinez M.-L."/>
            <person name="Koretke K.K."/>
            <person name="Volker C."/>
            <person name="Mewes H.-W."/>
            <person name="Frishman D."/>
            <person name="Stocker S."/>
            <person name="Lupas A.N."/>
            <person name="Baumeister W."/>
        </authorList>
    </citation>
    <scope>NUCLEOTIDE SEQUENCE [LARGE SCALE GENOMIC DNA]</scope>
    <source>
        <strain>ATCC 25905 / DSM 1728 / JCM 9062 / NBRC 15155 / AMRC-C165</strain>
    </source>
</reference>
<comment type="function">
    <text evidence="1">One of the primary rRNA binding proteins, it binds specifically to the 5'-end of 16S ribosomal RNA.</text>
</comment>
<comment type="subunit">
    <text evidence="1">Part of the 30S ribosomal subunit.</text>
</comment>
<comment type="similarity">
    <text evidence="1">Belongs to the universal ribosomal protein uS17 family.</text>
</comment>
<organism>
    <name type="scientific">Thermoplasma acidophilum (strain ATCC 25905 / DSM 1728 / JCM 9062 / NBRC 15155 / AMRC-C165)</name>
    <dbReference type="NCBI Taxonomy" id="273075"/>
    <lineage>
        <taxon>Archaea</taxon>
        <taxon>Methanobacteriati</taxon>
        <taxon>Thermoplasmatota</taxon>
        <taxon>Thermoplasmata</taxon>
        <taxon>Thermoplasmatales</taxon>
        <taxon>Thermoplasmataceae</taxon>
        <taxon>Thermoplasma</taxon>
    </lineage>
</organism>